<keyword id="KW-0002">3D-structure</keyword>
<keyword id="KW-0004">4Fe-4S</keyword>
<keyword id="KW-0903">Direct protein sequencing</keyword>
<keyword id="KW-0249">Electron transport</keyword>
<keyword id="KW-0408">Iron</keyword>
<keyword id="KW-0411">Iron-sulfur</keyword>
<keyword id="KW-0479">Metal-binding</keyword>
<keyword id="KW-0813">Transport</keyword>
<dbReference type="EMBL" id="AJ489482">
    <property type="protein sequence ID" value="CAD33799.1"/>
    <property type="molecule type" value="Genomic_DNA"/>
</dbReference>
<dbReference type="PIR" id="A56050">
    <property type="entry name" value="FEDV1A"/>
</dbReference>
<dbReference type="RefSeq" id="WP_014259208.1">
    <property type="nucleotide sequence ID" value="NZ_JBAIZI010000272.1"/>
</dbReference>
<dbReference type="PDB" id="1DAX">
    <property type="method" value="NMR"/>
    <property type="chains" value="A=2-65"/>
</dbReference>
<dbReference type="PDB" id="1DFD">
    <property type="method" value="NMR"/>
    <property type="chains" value="A=2-65"/>
</dbReference>
<dbReference type="PDB" id="1FXR">
    <property type="method" value="X-ray"/>
    <property type="resolution" value="2.30 A"/>
    <property type="chains" value="A/B=2-65"/>
</dbReference>
<dbReference type="PDBsum" id="1DAX"/>
<dbReference type="PDBsum" id="1DFD"/>
<dbReference type="PDBsum" id="1FXR"/>
<dbReference type="SMR" id="P00210"/>
<dbReference type="EvolutionaryTrace" id="P00210"/>
<dbReference type="GO" id="GO:0051539">
    <property type="term" value="F:4 iron, 4 sulfur cluster binding"/>
    <property type="evidence" value="ECO:0007669"/>
    <property type="project" value="UniProtKB-KW"/>
</dbReference>
<dbReference type="GO" id="GO:0009055">
    <property type="term" value="F:electron transfer activity"/>
    <property type="evidence" value="ECO:0007669"/>
    <property type="project" value="InterPro"/>
</dbReference>
<dbReference type="GO" id="GO:0005506">
    <property type="term" value="F:iron ion binding"/>
    <property type="evidence" value="ECO:0007669"/>
    <property type="project" value="InterPro"/>
</dbReference>
<dbReference type="Gene3D" id="3.30.70.20">
    <property type="match status" value="1"/>
</dbReference>
<dbReference type="InterPro" id="IPR001080">
    <property type="entry name" value="3Fe4S_ferredoxin"/>
</dbReference>
<dbReference type="InterPro" id="IPR017896">
    <property type="entry name" value="4Fe4S_Fe-S-bd"/>
</dbReference>
<dbReference type="InterPro" id="IPR052395">
    <property type="entry name" value="ET_Ferredoxin"/>
</dbReference>
<dbReference type="PANTHER" id="PTHR39163">
    <property type="entry name" value="FERREDOXIN"/>
    <property type="match status" value="1"/>
</dbReference>
<dbReference type="PANTHER" id="PTHR39163:SF1">
    <property type="entry name" value="FERREDOXIN"/>
    <property type="match status" value="1"/>
</dbReference>
<dbReference type="Pfam" id="PF13370">
    <property type="entry name" value="Fer4_13"/>
    <property type="match status" value="1"/>
</dbReference>
<dbReference type="PRINTS" id="PR00352">
    <property type="entry name" value="3FE4SFRDOXIN"/>
</dbReference>
<dbReference type="SUPFAM" id="SSF54862">
    <property type="entry name" value="4Fe-4S ferredoxins"/>
    <property type="match status" value="1"/>
</dbReference>
<dbReference type="PROSITE" id="PS51379">
    <property type="entry name" value="4FE4S_FER_2"/>
    <property type="match status" value="1"/>
</dbReference>
<evidence type="ECO:0000255" key="1">
    <source>
        <dbReference type="PROSITE-ProRule" id="PRU00711"/>
    </source>
</evidence>
<evidence type="ECO:0000269" key="2">
    <source>
    </source>
</evidence>
<evidence type="ECO:0000269" key="3">
    <source>
    </source>
</evidence>
<evidence type="ECO:0007829" key="4">
    <source>
        <dbReference type="PDB" id="1DAX"/>
    </source>
</evidence>
<evidence type="ECO:0007829" key="5">
    <source>
        <dbReference type="PDB" id="1FXR"/>
    </source>
</evidence>
<protein>
    <recommendedName>
        <fullName>Ferredoxin-1</fullName>
    </recommendedName>
    <alternativeName>
        <fullName>Ferredoxin I</fullName>
        <shortName>FdI</shortName>
    </alternativeName>
</protein>
<feature type="initiator methionine" description="Removed" evidence="2">
    <location>
        <position position="1"/>
    </location>
</feature>
<feature type="chain" id="PRO_0000159194" description="Ferredoxin-1">
    <location>
        <begin position="2"/>
        <end position="65"/>
    </location>
</feature>
<feature type="domain" description="4Fe-4S ferredoxin-type" evidence="1">
    <location>
        <begin position="3"/>
        <end position="31"/>
    </location>
</feature>
<feature type="binding site" evidence="3">
    <location>
        <position position="12"/>
    </location>
    <ligand>
        <name>[4Fe-4S] cluster</name>
        <dbReference type="ChEBI" id="CHEBI:49883"/>
    </ligand>
</feature>
<feature type="binding site" evidence="3">
    <location>
        <position position="15"/>
    </location>
    <ligand>
        <name>[4Fe-4S] cluster</name>
        <dbReference type="ChEBI" id="CHEBI:49883"/>
    </ligand>
</feature>
<feature type="binding site" evidence="3">
    <location>
        <position position="18"/>
    </location>
    <ligand>
        <name>[4Fe-4S] cluster</name>
        <dbReference type="ChEBI" id="CHEBI:49883"/>
    </ligand>
</feature>
<feature type="binding site" evidence="3">
    <location>
        <position position="55"/>
    </location>
    <ligand>
        <name>[4Fe-4S] cluster</name>
        <dbReference type="ChEBI" id="CHEBI:49883"/>
    </ligand>
</feature>
<feature type="strand" evidence="5">
    <location>
        <begin position="4"/>
        <end position="7"/>
    </location>
</feature>
<feature type="turn" evidence="5">
    <location>
        <begin position="9"/>
        <end position="11"/>
    </location>
</feature>
<feature type="helix" evidence="5">
    <location>
        <begin position="17"/>
        <end position="21"/>
    </location>
</feature>
<feature type="turn" evidence="5">
    <location>
        <begin position="23"/>
        <end position="25"/>
    </location>
</feature>
<feature type="strand" evidence="5">
    <location>
        <begin position="26"/>
        <end position="28"/>
    </location>
</feature>
<feature type="turn" evidence="5">
    <location>
        <begin position="30"/>
        <end position="32"/>
    </location>
</feature>
<feature type="strand" evidence="5">
    <location>
        <begin position="35"/>
        <end position="38"/>
    </location>
</feature>
<feature type="helix" evidence="4">
    <location>
        <begin position="40"/>
        <end position="42"/>
    </location>
</feature>
<feature type="helix" evidence="5">
    <location>
        <begin position="45"/>
        <end position="54"/>
    </location>
</feature>
<feature type="strand" evidence="4">
    <location>
        <begin position="55"/>
        <end position="57"/>
    </location>
</feature>
<feature type="strand" evidence="5">
    <location>
        <begin position="60"/>
        <end position="63"/>
    </location>
</feature>
<name>FER1_DESAF</name>
<sequence length="65" mass="7333">MARKFYVDQDECIACESCVEIAPGAFAMDPEIEKAYVKDVEGASQEEVEEAMDTCPVQCIHWEDE</sequence>
<accession>P00210</accession>
<organism>
    <name type="scientific">Desulfocurvibacter africanus</name>
    <name type="common">Desulfovibrio africanus</name>
    <dbReference type="NCBI Taxonomy" id="873"/>
    <lineage>
        <taxon>Bacteria</taxon>
        <taxon>Pseudomonadati</taxon>
        <taxon>Thermodesulfobacteriota</taxon>
        <taxon>Desulfovibrionia</taxon>
        <taxon>Desulfovibrionales</taxon>
        <taxon>Desulfovibrionaceae</taxon>
        <taxon>Desulfocurvibacter</taxon>
    </lineage>
</organism>
<proteinExistence type="evidence at protein level"/>
<comment type="function">
    <text>Ferredoxins are iron-sulfur proteins that transfer electrons in a wide variety of metabolic reactions.</text>
</comment>
<comment type="cofactor">
    <cofactor>
        <name>[4Fe-4S] cluster</name>
        <dbReference type="ChEBI" id="CHEBI:49883"/>
    </cofactor>
    <text>Binds 1 [4Fe-4S] cluster.</text>
</comment>
<comment type="subunit">
    <text>Homodimer.</text>
</comment>
<gene>
    <name type="primary">fd1</name>
</gene>
<reference key="1">
    <citation type="submission" date="2002-06" db="EMBL/GenBank/DDBJ databases">
        <title>Investigations of the role of surface residues of ferredoxin I from Desulfovibrio africanus in the interaction with its redox partner, the pyruvate ferredoxin:oxidoreductase.</title>
        <authorList>
            <person name="Cavazza C.C."/>
            <person name="Hatchikian E.C."/>
        </authorList>
    </citation>
    <scope>NUCLEOTIDE SEQUENCE [GENOMIC DNA]</scope>
    <source>
        <strain>ATCC 19996 / DSM 2603 / NCIMB 8401 / Benghazi</strain>
    </source>
</reference>
<reference key="2">
    <citation type="journal article" date="1982" name="Biochimie">
        <title>Non-heme iron proteins of Desulfovibrio: the primary structure of ferredoxin I from Desulfovibrio africanus.</title>
        <authorList>
            <person name="Bruschi M."/>
            <person name="Hatchikian E.C."/>
        </authorList>
    </citation>
    <scope>PROTEIN SEQUENCE OF 2-65</scope>
    <source>
        <strain>ATCC 19996 / DSM 2603 / NCIMB 8401 / Benghazi</strain>
    </source>
</reference>
<reference key="3">
    <citation type="journal article" date="1994" name="Biochemistry">
        <title>Crystal structure of the ferredoxin I from Desulfovibrio africanus at 2.3-A resolution.</title>
        <authorList>
            <person name="Seri A."/>
            <person name="Housset D."/>
            <person name="Serre L."/>
            <person name="Bonicel J."/>
            <person name="Hatchikian E.C."/>
            <person name="Frey M."/>
            <person name="Roth M."/>
        </authorList>
    </citation>
    <scope>X-RAY CRYSTALLOGRAPHY (2.3 ANGSTROMS)</scope>
    <scope>SEQUENCE REVISION</scope>
</reference>
<reference key="4">
    <citation type="journal article" date="1998" name="J. Mol. Biol.">
        <title>Determination of the structure of oxidised Desulfovibrio africanus ferredoxin I by 1H NMR spectroscopy and comparison of its solution structure with its crystal structure.</title>
        <authorList>
            <person name="Davy S.L."/>
            <person name="Osborne M.J."/>
            <person name="Moore G.R."/>
        </authorList>
    </citation>
    <scope>STRUCTURE BY NMR</scope>
</reference>